<reference key="1">
    <citation type="journal article" date="1996" name="Brain Res. Mol. Brain Res.">
        <title>Cloning of a serine proteinase inhibitor from bovine brain: expression in the brain and characterization of its target proteinases.</title>
        <authorList>
            <person name="Nakaya N."/>
            <person name="Nishibori M."/>
            <person name="Kawabata M."/>
            <person name="Saeki K."/>
        </authorList>
    </citation>
    <scope>NUCLEOTIDE SEQUENCE [MRNA]</scope>
    <source>
        <tissue>Brain</tissue>
    </source>
</reference>
<reference key="2">
    <citation type="submission" date="2007-06" db="EMBL/GenBank/DDBJ databases">
        <authorList>
            <consortium name="NIH - Mammalian Gene Collection (MGC) project"/>
        </authorList>
    </citation>
    <scope>NUCLEOTIDE SEQUENCE [LARGE SCALE MRNA]</scope>
    <source>
        <strain>Hereford</strain>
        <tissue>Fetal lung</tissue>
    </source>
</reference>
<organism>
    <name type="scientific">Bos taurus</name>
    <name type="common">Bovine</name>
    <dbReference type="NCBI Taxonomy" id="9913"/>
    <lineage>
        <taxon>Eukaryota</taxon>
        <taxon>Metazoa</taxon>
        <taxon>Chordata</taxon>
        <taxon>Craniata</taxon>
        <taxon>Vertebrata</taxon>
        <taxon>Euteleostomi</taxon>
        <taxon>Mammalia</taxon>
        <taxon>Eutheria</taxon>
        <taxon>Laurasiatheria</taxon>
        <taxon>Artiodactyla</taxon>
        <taxon>Ruminantia</taxon>
        <taxon>Pecora</taxon>
        <taxon>Bovidae</taxon>
        <taxon>Bovinae</taxon>
        <taxon>Bos</taxon>
    </lineage>
</organism>
<proteinExistence type="evidence at transcript level"/>
<dbReference type="EMBL" id="D55670">
    <property type="protein sequence ID" value="BAA19875.1"/>
    <property type="molecule type" value="mRNA"/>
</dbReference>
<dbReference type="EMBL" id="BC142394">
    <property type="protein sequence ID" value="AAI42395.1"/>
    <property type="molecule type" value="mRNA"/>
</dbReference>
<dbReference type="RefSeq" id="NP_777214.1">
    <property type="nucleotide sequence ID" value="NM_174789.1"/>
</dbReference>
<dbReference type="SMR" id="O02739"/>
<dbReference type="FunCoup" id="O02739">
    <property type="interactions" value="1017"/>
</dbReference>
<dbReference type="STRING" id="9913.ENSBTAP00000070967"/>
<dbReference type="PaxDb" id="9913-ENSBTAP00000026816"/>
<dbReference type="PeptideAtlas" id="O02739"/>
<dbReference type="GeneID" id="286854"/>
<dbReference type="KEGG" id="bta:286854"/>
<dbReference type="CTD" id="5269"/>
<dbReference type="eggNOG" id="KOG2392">
    <property type="taxonomic scope" value="Eukaryota"/>
</dbReference>
<dbReference type="InParanoid" id="O02739"/>
<dbReference type="OrthoDB" id="9681171at2759"/>
<dbReference type="Proteomes" id="UP000009136">
    <property type="component" value="Unplaced"/>
</dbReference>
<dbReference type="GO" id="GO:0005737">
    <property type="term" value="C:cytoplasm"/>
    <property type="evidence" value="ECO:0000250"/>
    <property type="project" value="UniProtKB"/>
</dbReference>
<dbReference type="GO" id="GO:0005615">
    <property type="term" value="C:extracellular space"/>
    <property type="evidence" value="ECO:0000318"/>
    <property type="project" value="GO_Central"/>
</dbReference>
<dbReference type="GO" id="GO:0004867">
    <property type="term" value="F:serine-type endopeptidase inhibitor activity"/>
    <property type="evidence" value="ECO:0000318"/>
    <property type="project" value="GO_Central"/>
</dbReference>
<dbReference type="CDD" id="cd19565">
    <property type="entry name" value="serpinB6_CAP"/>
    <property type="match status" value="1"/>
</dbReference>
<dbReference type="FunFam" id="2.10.310.10:FF:000001">
    <property type="entry name" value="Serpin family A member 1"/>
    <property type="match status" value="1"/>
</dbReference>
<dbReference type="FunFam" id="2.30.39.10:FF:000001">
    <property type="entry name" value="Serpin family B member 2"/>
    <property type="match status" value="1"/>
</dbReference>
<dbReference type="FunFam" id="3.30.497.10:FF:000018">
    <property type="entry name" value="Serpin family B member 8"/>
    <property type="match status" value="1"/>
</dbReference>
<dbReference type="Gene3D" id="2.30.39.10">
    <property type="entry name" value="Alpha-1-antitrypsin, domain 1"/>
    <property type="match status" value="1"/>
</dbReference>
<dbReference type="Gene3D" id="3.30.497.10">
    <property type="entry name" value="Antithrombin, subunit I, domain 2"/>
    <property type="match status" value="1"/>
</dbReference>
<dbReference type="InterPro" id="IPR023795">
    <property type="entry name" value="Serpin_CS"/>
</dbReference>
<dbReference type="InterPro" id="IPR023796">
    <property type="entry name" value="Serpin_dom"/>
</dbReference>
<dbReference type="InterPro" id="IPR000215">
    <property type="entry name" value="Serpin_fam"/>
</dbReference>
<dbReference type="InterPro" id="IPR036186">
    <property type="entry name" value="Serpin_sf"/>
</dbReference>
<dbReference type="InterPro" id="IPR042178">
    <property type="entry name" value="Serpin_sf_1"/>
</dbReference>
<dbReference type="InterPro" id="IPR042185">
    <property type="entry name" value="Serpin_sf_2"/>
</dbReference>
<dbReference type="PANTHER" id="PTHR11461">
    <property type="entry name" value="SERINE PROTEASE INHIBITOR, SERPIN"/>
    <property type="match status" value="1"/>
</dbReference>
<dbReference type="PANTHER" id="PTHR11461:SF204">
    <property type="entry name" value="SERPIN B6"/>
    <property type="match status" value="1"/>
</dbReference>
<dbReference type="Pfam" id="PF00079">
    <property type="entry name" value="Serpin"/>
    <property type="match status" value="1"/>
</dbReference>
<dbReference type="SMART" id="SM00093">
    <property type="entry name" value="SERPIN"/>
    <property type="match status" value="1"/>
</dbReference>
<dbReference type="SUPFAM" id="SSF56574">
    <property type="entry name" value="Serpins"/>
    <property type="match status" value="1"/>
</dbReference>
<dbReference type="PROSITE" id="PS00284">
    <property type="entry name" value="SERPIN"/>
    <property type="match status" value="1"/>
</dbReference>
<name>SPB6_BOVIN</name>
<keyword id="KW-0007">Acetylation</keyword>
<keyword id="KW-0963">Cytoplasm</keyword>
<keyword id="KW-0646">Protease inhibitor</keyword>
<keyword id="KW-1185">Reference proteome</keyword>
<keyword id="KW-0722">Serine protease inhibitor</keyword>
<accession>O02739</accession>
<accession>A5PK82</accession>
<feature type="chain" id="PRO_0000094105" description="Serpin B6">
    <location>
        <begin position="1"/>
        <end position="378"/>
    </location>
</feature>
<feature type="site" description="Reactive bond" evidence="1">
    <location>
        <begin position="343"/>
        <end position="344"/>
    </location>
</feature>
<feature type="modified residue" description="N-acetylmethionine" evidence="2">
    <location>
        <position position="1"/>
    </location>
</feature>
<feature type="modified residue" description="N6-acetyllysine" evidence="3">
    <location>
        <position position="196"/>
    </location>
</feature>
<evidence type="ECO:0000250" key="1"/>
<evidence type="ECO:0000250" key="2">
    <source>
        <dbReference type="UniProtKB" id="P35237"/>
    </source>
</evidence>
<evidence type="ECO:0000250" key="3">
    <source>
        <dbReference type="UniProtKB" id="Q60854"/>
    </source>
</evidence>
<evidence type="ECO:0000305" key="4"/>
<protein>
    <recommendedName>
        <fullName>Serpin B6</fullName>
    </recommendedName>
    <alternativeName>
        <fullName>Proteinase inhibitor 6</fullName>
    </alternativeName>
    <alternativeName>
        <fullName>Serine proteinase inhibitor B-43</fullName>
    </alternativeName>
</protein>
<gene>
    <name type="primary">SERPINB6</name>
</gene>
<comment type="function">
    <text evidence="1">Inhibitor of cathepsin G, kallikrein-8 and thrombin. May play an important role in the inner ear in the protection against leakage of lysosomal content during stress (By similarity). May be involved in the regulation of serine proteinases present in the brain or extravasated from the blood.</text>
</comment>
<comment type="subunit">
    <text evidence="1">Forms a complex with the monomeric form of beta-tryptase.</text>
</comment>
<comment type="subcellular location">
    <subcellularLocation>
        <location evidence="1">Cytoplasm</location>
    </subcellularLocation>
</comment>
<comment type="tissue specificity">
    <text>Brain.</text>
</comment>
<comment type="similarity">
    <text evidence="4">Belongs to the serpin family. Ov-serpin subfamily.</text>
</comment>
<sequence length="378" mass="42561">MDALSEANGTFALTLLKKLGEGNSKNVFISPLSISSALAMVLLGAKGNTAAQMCQTLSLNKSSGGGEDVHQGFQNLLSEVNRRDTQYLLRTANRLFGEKTYDFLSSFKDSCHKFYQAEMEELDFVSATEQSRKHINTWVAEKTEGKIRDLLPANSVNPMTRLVLVNAIYFKGNWDTQFNKEHTEERPFRVSKNVEKPVQMMFKKSTCKITYIGEISTQILVLPYVGQELNMVILLPSESTDLNTVEKALTYEKFIAWTKPDVMDEEEVEVFLPRFTLEESYDMEEFLQELGMTDAFEETRADFSGMSSGRGLHLSKVMHKSFVEVTEEGTEAAAATGAVVMMRCLMVVPRFNANHPFLFFIQHSKTGAILFCGRFCSP</sequence>